<protein>
    <recommendedName>
        <fullName>High-affinity zinc uptake system protein ZnuA</fullName>
    </recommendedName>
</protein>
<organism>
    <name type="scientific">Brucella abortus (strain 2308)</name>
    <dbReference type="NCBI Taxonomy" id="359391"/>
    <lineage>
        <taxon>Bacteria</taxon>
        <taxon>Pseudomonadati</taxon>
        <taxon>Pseudomonadota</taxon>
        <taxon>Alphaproteobacteria</taxon>
        <taxon>Hyphomicrobiales</taxon>
        <taxon>Brucellaceae</taxon>
        <taxon>Brucella/Ochrobactrum group</taxon>
        <taxon>Brucella</taxon>
    </lineage>
</organism>
<accession>Q2YJH5</accession>
<accession>Q58J93</accession>
<comment type="function">
    <text evidence="5">Part of the ATP-binding cassette (ABC) transport system ZnuABC involved in zinc import (PubMed:16790759). Binds zinc with high affinity and specificity and delivers it to the membrane permease for translocation into the cytoplasm (PubMed:16790759). Required for survival and normal growth under low Zn (2+) concentrations (PubMed:16790759). Also required for virulence and intracellular growth in macrophages (PubMed:16790759).</text>
</comment>
<comment type="subcellular location">
    <subcellularLocation>
        <location evidence="1">Periplasm</location>
    </subcellularLocation>
</comment>
<comment type="disruption phenotype">
    <text evidence="5">Mutant strain (znuA delection) is attenuated in infected mice, showing decreased splenic CFU. Also confers a protective efficacy similar to that of RB51 and S19 vaccine strains.</text>
</comment>
<comment type="similarity">
    <text evidence="6">Belongs to the bacterial solute-binding protein 9 family.</text>
</comment>
<dbReference type="EMBL" id="AY941821">
    <property type="protein sequence ID" value="AAX46323.1"/>
    <property type="molecule type" value="Genomic_DNA"/>
</dbReference>
<dbReference type="EMBL" id="AM040265">
    <property type="protein sequence ID" value="CAJ13245.1"/>
    <property type="molecule type" value="Genomic_DNA"/>
</dbReference>
<dbReference type="RefSeq" id="WP_002966661.1">
    <property type="nucleotide sequence ID" value="NZ_KN046823.1"/>
</dbReference>
<dbReference type="SMR" id="Q2YJH5"/>
<dbReference type="STRING" id="359391.BAB2_1079"/>
<dbReference type="GeneID" id="93016086"/>
<dbReference type="KEGG" id="bmf:BAB2_1079"/>
<dbReference type="PATRIC" id="fig|359391.11.peg.1863"/>
<dbReference type="HOGENOM" id="CLU_016838_1_2_5"/>
<dbReference type="PhylomeDB" id="Q2YJH5"/>
<dbReference type="PRO" id="PR:Q2YJH5"/>
<dbReference type="Proteomes" id="UP000002719">
    <property type="component" value="Chromosome II"/>
</dbReference>
<dbReference type="GO" id="GO:0042597">
    <property type="term" value="C:periplasmic space"/>
    <property type="evidence" value="ECO:0007669"/>
    <property type="project" value="UniProtKB-SubCell"/>
</dbReference>
<dbReference type="GO" id="GO:0046872">
    <property type="term" value="F:metal ion binding"/>
    <property type="evidence" value="ECO:0007669"/>
    <property type="project" value="UniProtKB-KW"/>
</dbReference>
<dbReference type="GO" id="GO:0006829">
    <property type="term" value="P:zinc ion transport"/>
    <property type="evidence" value="ECO:0007669"/>
    <property type="project" value="UniProtKB-KW"/>
</dbReference>
<dbReference type="CDD" id="cd01019">
    <property type="entry name" value="ZnuA"/>
    <property type="match status" value="1"/>
</dbReference>
<dbReference type="Gene3D" id="3.40.50.1980">
    <property type="entry name" value="Nitrogenase molybdenum iron protein domain"/>
    <property type="match status" value="2"/>
</dbReference>
<dbReference type="InterPro" id="IPR050492">
    <property type="entry name" value="Bact_metal-bind_prot9"/>
</dbReference>
<dbReference type="InterPro" id="IPR035520">
    <property type="entry name" value="ZnuA"/>
</dbReference>
<dbReference type="InterPro" id="IPR006127">
    <property type="entry name" value="ZnuA-like"/>
</dbReference>
<dbReference type="NCBIfam" id="NF007091">
    <property type="entry name" value="PRK09545.1"/>
    <property type="match status" value="1"/>
</dbReference>
<dbReference type="PANTHER" id="PTHR42953:SF3">
    <property type="entry name" value="HIGH-AFFINITY ZINC UPTAKE SYSTEM PROTEIN ZNUA"/>
    <property type="match status" value="1"/>
</dbReference>
<dbReference type="PANTHER" id="PTHR42953">
    <property type="entry name" value="HIGH-AFFINITY ZINC UPTAKE SYSTEM PROTEIN ZNUA-RELATED"/>
    <property type="match status" value="1"/>
</dbReference>
<dbReference type="Pfam" id="PF01297">
    <property type="entry name" value="ZnuA"/>
    <property type="match status" value="1"/>
</dbReference>
<dbReference type="SUPFAM" id="SSF53807">
    <property type="entry name" value="Helical backbone' metal receptor"/>
    <property type="match status" value="1"/>
</dbReference>
<evidence type="ECO:0000250" key="1">
    <source>
        <dbReference type="UniProtKB" id="A1B9L0"/>
    </source>
</evidence>
<evidence type="ECO:0000250" key="2">
    <source>
        <dbReference type="UniProtKB" id="P39172"/>
    </source>
</evidence>
<evidence type="ECO:0000255" key="3"/>
<evidence type="ECO:0000256" key="4">
    <source>
        <dbReference type="SAM" id="MobiDB-lite"/>
    </source>
</evidence>
<evidence type="ECO:0000269" key="5">
    <source>
    </source>
</evidence>
<evidence type="ECO:0000305" key="6"/>
<proteinExistence type="inferred from homology"/>
<keyword id="KW-1015">Disulfide bond</keyword>
<keyword id="KW-0406">Ion transport</keyword>
<keyword id="KW-0479">Metal-binding</keyword>
<keyword id="KW-0574">Periplasm</keyword>
<keyword id="KW-1185">Reference proteome</keyword>
<keyword id="KW-0732">Signal</keyword>
<keyword id="KW-0813">Transport</keyword>
<keyword id="KW-0843">Virulence</keyword>
<keyword id="KW-0862">Zinc</keyword>
<keyword id="KW-0864">Zinc transport</keyword>
<reference key="1">
    <citation type="journal article" date="2006" name="Infect. Immun.">
        <title>Deletion of znuA virulence factor attenuates Brucella abortus and confers protection against wild-type challenge.</title>
        <authorList>
            <person name="Yang X."/>
            <person name="Becker T."/>
            <person name="Walters N."/>
            <person name="Pascual D.W."/>
        </authorList>
    </citation>
    <scope>NUCLEOTIDE SEQUENCE [GENOMIC DNA]</scope>
    <scope>FUNCTION</scope>
    <scope>DISRUPTION PHENOTYPE</scope>
</reference>
<reference key="2">
    <citation type="journal article" date="2005" name="Infect. Immun.">
        <title>Whole-genome analyses of speciation events in pathogenic Brucellae.</title>
        <authorList>
            <person name="Chain P.S."/>
            <person name="Comerci D.J."/>
            <person name="Tolmasky M.E."/>
            <person name="Larimer F.W."/>
            <person name="Malfatti S.A."/>
            <person name="Vergez L.M."/>
            <person name="Aguero F."/>
            <person name="Land M.L."/>
            <person name="Ugalde R.A."/>
            <person name="Garcia E."/>
        </authorList>
    </citation>
    <scope>NUCLEOTIDE SEQUENCE [LARGE SCALE GENOMIC DNA]</scope>
    <source>
        <strain>2308</strain>
    </source>
</reference>
<feature type="signal peptide" evidence="3">
    <location>
        <begin position="1"/>
        <end position="23"/>
    </location>
</feature>
<feature type="chain" id="PRO_0000248947" description="High-affinity zinc uptake system protein ZnuA">
    <location>
        <begin position="24"/>
        <end position="334"/>
    </location>
</feature>
<feature type="region of interest" description="Disordered" evidence="4">
    <location>
        <begin position="120"/>
        <end position="147"/>
    </location>
</feature>
<feature type="binding site" evidence="2">
    <location>
        <position position="60"/>
    </location>
    <ligand>
        <name>Zn(2+)</name>
        <dbReference type="ChEBI" id="CHEBI:29105"/>
    </ligand>
</feature>
<feature type="binding site" evidence="2">
    <location>
        <position position="61"/>
    </location>
    <ligand>
        <name>Zn(2+)</name>
        <dbReference type="ChEBI" id="CHEBI:29105"/>
    </ligand>
</feature>
<feature type="binding site" evidence="2">
    <location>
        <position position="168"/>
    </location>
    <ligand>
        <name>Zn(2+)</name>
        <dbReference type="ChEBI" id="CHEBI:29105"/>
    </ligand>
</feature>
<feature type="binding site" evidence="2">
    <location>
        <position position="232"/>
    </location>
    <ligand>
        <name>Zn(2+)</name>
        <dbReference type="ChEBI" id="CHEBI:29105"/>
    </ligand>
</feature>
<feature type="disulfide bond" evidence="2">
    <location>
        <begin position="277"/>
        <end position="331"/>
    </location>
</feature>
<feature type="sequence conflict" description="In Ref. 1; AAX46323." evidence="6" ref="1">
    <original>I</original>
    <variation>T</variation>
    <location>
        <position position="266"/>
    </location>
</feature>
<name>ZNUA_BRUA2</name>
<gene>
    <name type="primary">znuA</name>
    <name type="ordered locus">BAB2_1079</name>
</gene>
<sequence>MKNLHSLFLASAFLAGFCGSSLAGEREGVVVSIKPLHSIVSAVMQGVGKPKLIVQGAGSEHVYSLKPSDAEAIEHAKVIFWAGPSMETFLDKPIDTLGEGAKVVALGDAKGLTKLKFREGGPFEAHDHGHGGSHEEEHDAHGSGDHDHAAEVAEEGHEHHHHGEYDLHFWLDPQNGKILAADIAKTLGESDPEHAAQYEKNAKAYGEKLDALTREVAAELKPVKDKPFIVFHDAYQYFENRFGMKAAGSITVSPEKAPGAARIQQIHDKIKSLGATCVFSEPQFEPKLVKTVVDGTKARTGVLDPLGAELKDGPDLYPQLIRNLANSLKDCLPK</sequence>